<proteinExistence type="inferred from homology"/>
<comment type="function">
    <text evidence="1">Binds to 23S rRNA. Forms part of two intersubunit bridges in the 70S ribosome.</text>
</comment>
<comment type="subunit">
    <text evidence="1">Part of the 50S ribosomal subunit. Forms a cluster with proteins L3 and L19. In the 70S ribosome, L14 and L19 interact and together make contacts with the 16S rRNA in bridges B5 and B8.</text>
</comment>
<comment type="similarity">
    <text evidence="1">Belongs to the universal ribosomal protein uL14 family.</text>
</comment>
<evidence type="ECO:0000255" key="1">
    <source>
        <dbReference type="HAMAP-Rule" id="MF_01367"/>
    </source>
</evidence>
<evidence type="ECO:0000305" key="2"/>
<dbReference type="EMBL" id="CP000251">
    <property type="protein sequence ID" value="ABC81707.1"/>
    <property type="molecule type" value="Genomic_DNA"/>
</dbReference>
<dbReference type="RefSeq" id="WP_011420990.1">
    <property type="nucleotide sequence ID" value="NC_007760.1"/>
</dbReference>
<dbReference type="SMR" id="Q2IJ77"/>
<dbReference type="STRING" id="290397.Adeh_1936"/>
<dbReference type="KEGG" id="ade:Adeh_1936"/>
<dbReference type="eggNOG" id="COG0093">
    <property type="taxonomic scope" value="Bacteria"/>
</dbReference>
<dbReference type="HOGENOM" id="CLU_095071_2_1_7"/>
<dbReference type="OrthoDB" id="9806379at2"/>
<dbReference type="Proteomes" id="UP000001935">
    <property type="component" value="Chromosome"/>
</dbReference>
<dbReference type="GO" id="GO:0022625">
    <property type="term" value="C:cytosolic large ribosomal subunit"/>
    <property type="evidence" value="ECO:0007669"/>
    <property type="project" value="TreeGrafter"/>
</dbReference>
<dbReference type="GO" id="GO:0070180">
    <property type="term" value="F:large ribosomal subunit rRNA binding"/>
    <property type="evidence" value="ECO:0007669"/>
    <property type="project" value="TreeGrafter"/>
</dbReference>
<dbReference type="GO" id="GO:0003735">
    <property type="term" value="F:structural constituent of ribosome"/>
    <property type="evidence" value="ECO:0007669"/>
    <property type="project" value="InterPro"/>
</dbReference>
<dbReference type="GO" id="GO:0006412">
    <property type="term" value="P:translation"/>
    <property type="evidence" value="ECO:0007669"/>
    <property type="project" value="UniProtKB-UniRule"/>
</dbReference>
<dbReference type="CDD" id="cd00337">
    <property type="entry name" value="Ribosomal_uL14"/>
    <property type="match status" value="1"/>
</dbReference>
<dbReference type="FunFam" id="2.40.150.20:FF:000001">
    <property type="entry name" value="50S ribosomal protein L14"/>
    <property type="match status" value="1"/>
</dbReference>
<dbReference type="Gene3D" id="2.40.150.20">
    <property type="entry name" value="Ribosomal protein L14"/>
    <property type="match status" value="1"/>
</dbReference>
<dbReference type="HAMAP" id="MF_01367">
    <property type="entry name" value="Ribosomal_uL14"/>
    <property type="match status" value="1"/>
</dbReference>
<dbReference type="InterPro" id="IPR000218">
    <property type="entry name" value="Ribosomal_uL14"/>
</dbReference>
<dbReference type="InterPro" id="IPR005745">
    <property type="entry name" value="Ribosomal_uL14_bac-type"/>
</dbReference>
<dbReference type="InterPro" id="IPR019972">
    <property type="entry name" value="Ribosomal_uL14_CS"/>
</dbReference>
<dbReference type="InterPro" id="IPR036853">
    <property type="entry name" value="Ribosomal_uL14_sf"/>
</dbReference>
<dbReference type="NCBIfam" id="TIGR01067">
    <property type="entry name" value="rplN_bact"/>
    <property type="match status" value="1"/>
</dbReference>
<dbReference type="PANTHER" id="PTHR11761">
    <property type="entry name" value="50S/60S RIBOSOMAL PROTEIN L14/L23"/>
    <property type="match status" value="1"/>
</dbReference>
<dbReference type="PANTHER" id="PTHR11761:SF3">
    <property type="entry name" value="LARGE RIBOSOMAL SUBUNIT PROTEIN UL14M"/>
    <property type="match status" value="1"/>
</dbReference>
<dbReference type="Pfam" id="PF00238">
    <property type="entry name" value="Ribosomal_L14"/>
    <property type="match status" value="1"/>
</dbReference>
<dbReference type="SMART" id="SM01374">
    <property type="entry name" value="Ribosomal_L14"/>
    <property type="match status" value="1"/>
</dbReference>
<dbReference type="SUPFAM" id="SSF50193">
    <property type="entry name" value="Ribosomal protein L14"/>
    <property type="match status" value="1"/>
</dbReference>
<dbReference type="PROSITE" id="PS00049">
    <property type="entry name" value="RIBOSOMAL_L14"/>
    <property type="match status" value="1"/>
</dbReference>
<keyword id="KW-1185">Reference proteome</keyword>
<keyword id="KW-0687">Ribonucleoprotein</keyword>
<keyword id="KW-0689">Ribosomal protein</keyword>
<keyword id="KW-0694">RNA-binding</keyword>
<keyword id="KW-0699">rRNA-binding</keyword>
<sequence>MIQQQTMLDVADNSGAKRVMCIKVLGGTRRKYASIGDVIVVSIKEAIPQAKVKKGEVARAVIVRTAREVKRPDGSYIRFDGNSAVLINKDLEPIGTRIFGPVARELRARKFMKIISLAPEVL</sequence>
<gene>
    <name evidence="1" type="primary">rplN</name>
    <name type="ordered locus">Adeh_1936</name>
</gene>
<feature type="chain" id="PRO_0000266446" description="Large ribosomal subunit protein uL14">
    <location>
        <begin position="1"/>
        <end position="122"/>
    </location>
</feature>
<reference key="1">
    <citation type="submission" date="2006-01" db="EMBL/GenBank/DDBJ databases">
        <title>Complete sequence of Anaeromyxobacter dehalogenans 2CP-C.</title>
        <authorList>
            <person name="Copeland A."/>
            <person name="Lucas S."/>
            <person name="Lapidus A."/>
            <person name="Barry K."/>
            <person name="Detter J.C."/>
            <person name="Glavina T."/>
            <person name="Hammon N."/>
            <person name="Israni S."/>
            <person name="Pitluck S."/>
            <person name="Brettin T."/>
            <person name="Bruce D."/>
            <person name="Han C."/>
            <person name="Tapia R."/>
            <person name="Gilna P."/>
            <person name="Kiss H."/>
            <person name="Schmutz J."/>
            <person name="Larimer F."/>
            <person name="Land M."/>
            <person name="Kyrpides N."/>
            <person name="Anderson I."/>
            <person name="Sanford R.A."/>
            <person name="Ritalahti K.M."/>
            <person name="Thomas H.S."/>
            <person name="Kirby J.R."/>
            <person name="Zhulin I.B."/>
            <person name="Loeffler F.E."/>
            <person name="Richardson P."/>
        </authorList>
    </citation>
    <scope>NUCLEOTIDE SEQUENCE [LARGE SCALE GENOMIC DNA]</scope>
    <source>
        <strain>2CP-C</strain>
    </source>
</reference>
<name>RL14_ANADE</name>
<organism>
    <name type="scientific">Anaeromyxobacter dehalogenans (strain 2CP-C)</name>
    <dbReference type="NCBI Taxonomy" id="290397"/>
    <lineage>
        <taxon>Bacteria</taxon>
        <taxon>Pseudomonadati</taxon>
        <taxon>Myxococcota</taxon>
        <taxon>Myxococcia</taxon>
        <taxon>Myxococcales</taxon>
        <taxon>Cystobacterineae</taxon>
        <taxon>Anaeromyxobacteraceae</taxon>
        <taxon>Anaeromyxobacter</taxon>
    </lineage>
</organism>
<accession>Q2IJ77</accession>
<protein>
    <recommendedName>
        <fullName evidence="1">Large ribosomal subunit protein uL14</fullName>
    </recommendedName>
    <alternativeName>
        <fullName evidence="2">50S ribosomal protein L14</fullName>
    </alternativeName>
</protein>